<gene>
    <name type="ordered locus">Bxeno_A0904</name>
    <name type="ORF">Bxe_A3546</name>
</gene>
<evidence type="ECO:0000255" key="1">
    <source>
        <dbReference type="HAMAP-Rule" id="MF_01656"/>
    </source>
</evidence>
<organism>
    <name type="scientific">Paraburkholderia xenovorans (strain LB400)</name>
    <dbReference type="NCBI Taxonomy" id="266265"/>
    <lineage>
        <taxon>Bacteria</taxon>
        <taxon>Pseudomonadati</taxon>
        <taxon>Pseudomonadota</taxon>
        <taxon>Betaproteobacteria</taxon>
        <taxon>Burkholderiales</taxon>
        <taxon>Burkholderiaceae</taxon>
        <taxon>Paraburkholderia</taxon>
    </lineage>
</organism>
<feature type="chain" id="PRO_0000387810" description="4-hydroxy-2-oxovalerate aldolase 1">
    <location>
        <begin position="1"/>
        <end position="340"/>
    </location>
</feature>
<feature type="domain" description="Pyruvate carboxyltransferase" evidence="1">
    <location>
        <begin position="8"/>
        <end position="260"/>
    </location>
</feature>
<feature type="active site" description="Proton acceptor" evidence="1">
    <location>
        <position position="20"/>
    </location>
</feature>
<feature type="binding site" evidence="1">
    <location>
        <begin position="16"/>
        <end position="17"/>
    </location>
    <ligand>
        <name>substrate</name>
    </ligand>
</feature>
<feature type="binding site" evidence="1">
    <location>
        <position position="17"/>
    </location>
    <ligand>
        <name>Mn(2+)</name>
        <dbReference type="ChEBI" id="CHEBI:29035"/>
    </ligand>
</feature>
<feature type="binding site" evidence="1">
    <location>
        <position position="170"/>
    </location>
    <ligand>
        <name>substrate</name>
    </ligand>
</feature>
<feature type="binding site" evidence="1">
    <location>
        <position position="199"/>
    </location>
    <ligand>
        <name>Mn(2+)</name>
        <dbReference type="ChEBI" id="CHEBI:29035"/>
    </ligand>
</feature>
<feature type="binding site" evidence="1">
    <location>
        <position position="199"/>
    </location>
    <ligand>
        <name>substrate</name>
    </ligand>
</feature>
<feature type="binding site" evidence="1">
    <location>
        <position position="201"/>
    </location>
    <ligand>
        <name>Mn(2+)</name>
        <dbReference type="ChEBI" id="CHEBI:29035"/>
    </ligand>
</feature>
<feature type="binding site" evidence="1">
    <location>
        <position position="290"/>
    </location>
    <ligand>
        <name>substrate</name>
    </ligand>
</feature>
<feature type="site" description="Transition state stabilizer" evidence="1">
    <location>
        <position position="16"/>
    </location>
</feature>
<keyword id="KW-0058">Aromatic hydrocarbons catabolism</keyword>
<keyword id="KW-0456">Lyase</keyword>
<keyword id="KW-0464">Manganese</keyword>
<keyword id="KW-0479">Metal-binding</keyword>
<keyword id="KW-1185">Reference proteome</keyword>
<accession>Q143P7</accession>
<protein>
    <recommendedName>
        <fullName evidence="1">4-hydroxy-2-oxovalerate aldolase 1</fullName>
        <shortName evidence="1">HOA 1</shortName>
        <ecNumber evidence="1">4.1.3.39</ecNumber>
    </recommendedName>
    <alternativeName>
        <fullName evidence="1">4-hydroxy-2-keto-pentanoic acid aldolase 1</fullName>
    </alternativeName>
    <alternativeName>
        <fullName evidence="1">4-hydroxy-2-oxopentanoate aldolase 1</fullName>
    </alternativeName>
</protein>
<proteinExistence type="inferred from homology"/>
<dbReference type="EC" id="4.1.3.39" evidence="1"/>
<dbReference type="EMBL" id="CP000270">
    <property type="protein sequence ID" value="ABE29442.1"/>
    <property type="molecule type" value="Genomic_DNA"/>
</dbReference>
<dbReference type="RefSeq" id="WP_011487210.1">
    <property type="nucleotide sequence ID" value="NC_007951.1"/>
</dbReference>
<dbReference type="SMR" id="Q143P7"/>
<dbReference type="STRING" id="266265.Bxe_A3546"/>
<dbReference type="KEGG" id="bxb:DR64_1245"/>
<dbReference type="KEGG" id="bxe:Bxe_A3546"/>
<dbReference type="PATRIC" id="fig|266265.5.peg.918"/>
<dbReference type="eggNOG" id="COG0119">
    <property type="taxonomic scope" value="Bacteria"/>
</dbReference>
<dbReference type="OrthoDB" id="9803573at2"/>
<dbReference type="Proteomes" id="UP000001817">
    <property type="component" value="Chromosome 1"/>
</dbReference>
<dbReference type="GO" id="GO:0003852">
    <property type="term" value="F:2-isopropylmalate synthase activity"/>
    <property type="evidence" value="ECO:0007669"/>
    <property type="project" value="TreeGrafter"/>
</dbReference>
<dbReference type="GO" id="GO:0008701">
    <property type="term" value="F:4-hydroxy-2-oxovalerate aldolase activity"/>
    <property type="evidence" value="ECO:0007669"/>
    <property type="project" value="UniProtKB-UniRule"/>
</dbReference>
<dbReference type="GO" id="GO:0030145">
    <property type="term" value="F:manganese ion binding"/>
    <property type="evidence" value="ECO:0007669"/>
    <property type="project" value="UniProtKB-UniRule"/>
</dbReference>
<dbReference type="GO" id="GO:0009056">
    <property type="term" value="P:catabolic process"/>
    <property type="evidence" value="ECO:0007669"/>
    <property type="project" value="UniProtKB-KW"/>
</dbReference>
<dbReference type="GO" id="GO:0009098">
    <property type="term" value="P:L-leucine biosynthetic process"/>
    <property type="evidence" value="ECO:0007669"/>
    <property type="project" value="TreeGrafter"/>
</dbReference>
<dbReference type="CDD" id="cd07943">
    <property type="entry name" value="DRE_TIM_HOA"/>
    <property type="match status" value="1"/>
</dbReference>
<dbReference type="FunFam" id="1.10.8.60:FF:000042">
    <property type="entry name" value="4-hydroxy-2-oxovalerate aldolase"/>
    <property type="match status" value="1"/>
</dbReference>
<dbReference type="Gene3D" id="1.10.8.60">
    <property type="match status" value="1"/>
</dbReference>
<dbReference type="Gene3D" id="3.20.20.70">
    <property type="entry name" value="Aldolase class I"/>
    <property type="match status" value="1"/>
</dbReference>
<dbReference type="HAMAP" id="MF_01656">
    <property type="entry name" value="HOA"/>
    <property type="match status" value="1"/>
</dbReference>
<dbReference type="InterPro" id="IPR050073">
    <property type="entry name" value="2-IPM_HCS-like"/>
</dbReference>
<dbReference type="InterPro" id="IPR017629">
    <property type="entry name" value="4OH_2_O-val_aldolase"/>
</dbReference>
<dbReference type="InterPro" id="IPR013785">
    <property type="entry name" value="Aldolase_TIM"/>
</dbReference>
<dbReference type="InterPro" id="IPR012425">
    <property type="entry name" value="DmpG_comm"/>
</dbReference>
<dbReference type="InterPro" id="IPR035685">
    <property type="entry name" value="DRE_TIM_HOA"/>
</dbReference>
<dbReference type="InterPro" id="IPR000891">
    <property type="entry name" value="PYR_CT"/>
</dbReference>
<dbReference type="NCBIfam" id="TIGR03217">
    <property type="entry name" value="4OH_2_O_val_ald"/>
    <property type="match status" value="1"/>
</dbReference>
<dbReference type="NCBIfam" id="NF006049">
    <property type="entry name" value="PRK08195.1"/>
    <property type="match status" value="1"/>
</dbReference>
<dbReference type="PANTHER" id="PTHR10277:SF9">
    <property type="entry name" value="2-ISOPROPYLMALATE SYNTHASE 1, CHLOROPLASTIC-RELATED"/>
    <property type="match status" value="1"/>
</dbReference>
<dbReference type="PANTHER" id="PTHR10277">
    <property type="entry name" value="HOMOCITRATE SYNTHASE-RELATED"/>
    <property type="match status" value="1"/>
</dbReference>
<dbReference type="Pfam" id="PF07836">
    <property type="entry name" value="DmpG_comm"/>
    <property type="match status" value="1"/>
</dbReference>
<dbReference type="Pfam" id="PF00682">
    <property type="entry name" value="HMGL-like"/>
    <property type="match status" value="1"/>
</dbReference>
<dbReference type="SUPFAM" id="SSF51569">
    <property type="entry name" value="Aldolase"/>
    <property type="match status" value="1"/>
</dbReference>
<dbReference type="SUPFAM" id="SSF89000">
    <property type="entry name" value="post-HMGL domain-like"/>
    <property type="match status" value="1"/>
</dbReference>
<dbReference type="PROSITE" id="PS50991">
    <property type="entry name" value="PYR_CT"/>
    <property type="match status" value="1"/>
</dbReference>
<comment type="catalytic activity">
    <reaction evidence="1">
        <text>(S)-4-hydroxy-2-oxopentanoate = acetaldehyde + pyruvate</text>
        <dbReference type="Rhea" id="RHEA:22624"/>
        <dbReference type="ChEBI" id="CHEBI:15343"/>
        <dbReference type="ChEBI" id="CHEBI:15361"/>
        <dbReference type="ChEBI" id="CHEBI:73143"/>
        <dbReference type="EC" id="4.1.3.39"/>
    </reaction>
</comment>
<comment type="similarity">
    <text evidence="1">Belongs to the 4-hydroxy-2-oxovalerate aldolase family.</text>
</comment>
<reference key="1">
    <citation type="journal article" date="2006" name="Proc. Natl. Acad. Sci. U.S.A.">
        <title>Burkholderia xenovorans LB400 harbors a multi-replicon, 9.73-Mbp genome shaped for versatility.</title>
        <authorList>
            <person name="Chain P.S.G."/>
            <person name="Denef V.J."/>
            <person name="Konstantinidis K.T."/>
            <person name="Vergez L.M."/>
            <person name="Agullo L."/>
            <person name="Reyes V.L."/>
            <person name="Hauser L."/>
            <person name="Cordova M."/>
            <person name="Gomez L."/>
            <person name="Gonzalez M."/>
            <person name="Land M."/>
            <person name="Lao V."/>
            <person name="Larimer F."/>
            <person name="LiPuma J.J."/>
            <person name="Mahenthiralingam E."/>
            <person name="Malfatti S.A."/>
            <person name="Marx C.J."/>
            <person name="Parnell J.J."/>
            <person name="Ramette A."/>
            <person name="Richardson P."/>
            <person name="Seeger M."/>
            <person name="Smith D."/>
            <person name="Spilker T."/>
            <person name="Sul W.J."/>
            <person name="Tsoi T.V."/>
            <person name="Ulrich L.E."/>
            <person name="Zhulin I.B."/>
            <person name="Tiedje J.M."/>
        </authorList>
    </citation>
    <scope>NUCLEOTIDE SEQUENCE [LARGE SCALE GENOMIC DNA]</scope>
    <source>
        <strain>LB400</strain>
    </source>
</reference>
<name>HOA1_PARXL</name>
<sequence>MNEKSRKIYVSDVTLRDGMHAIRHQYSLADVGRIARALDQAGVDSIEVAHGDGLRGSSFNYGFGAHTDLEWIAAVAEVVEQAKIATLLLPGIGTIHDLKAAYDAGARVVRVATHCTEADISRQHIEYARSLGMDTVGFLMMSHMTTPENLAVEARKMESYGATCIYVVDSGGAMNMNDIRDRFRALKEALDPATQTGIHAHHNLSLGVANSIVAVEEGCDRVDASLAGMGAGAGNAPLEVFIAAAERLGWNHGTDLYALMDAADDIVRPLQDRPVRVDRETLALGYAGVYSSFLRHSEVAADRYGLKAVDILVELGRRKMVGGQEDMIVDVALDLLRNPA</sequence>